<organism>
    <name type="scientific">Mesorhizobium japonicum (strain LMG 29417 / CECT 9101 / MAFF 303099)</name>
    <name type="common">Mesorhizobium loti (strain MAFF 303099)</name>
    <dbReference type="NCBI Taxonomy" id="266835"/>
    <lineage>
        <taxon>Bacteria</taxon>
        <taxon>Pseudomonadati</taxon>
        <taxon>Pseudomonadota</taxon>
        <taxon>Alphaproteobacteria</taxon>
        <taxon>Hyphomicrobiales</taxon>
        <taxon>Phyllobacteriaceae</taxon>
        <taxon>Mesorhizobium</taxon>
    </lineage>
</organism>
<protein>
    <recommendedName>
        <fullName evidence="1">7-cyano-7-deazaguanine synthase 1</fullName>
        <ecNumber evidence="1">6.3.4.20</ecNumber>
    </recommendedName>
    <alternativeName>
        <fullName evidence="1">7-cyano-7-carbaguanine synthase 1</fullName>
    </alternativeName>
    <alternativeName>
        <fullName evidence="1">PreQ(0) synthase 1</fullName>
    </alternativeName>
    <alternativeName>
        <fullName evidence="1">Queuosine biosynthesis protein QueC 1</fullName>
    </alternativeName>
</protein>
<sequence length="232" mass="25125">MNALVICSGGLDSVSLAHKVATEQKLIGLLSFDYGQRHKKELGFAAICAKRLAVPHQIVDIRDVGRNLSGSALTDNVDVPDGHYAEDSMRITVVPNRNAIMLAIAFGVAAAKKADAVATAVHGGDHFIYPDCRPAFIDAFQTMQNHALAGYADIRLYAPYVNMSKADIVSEGAKYATPFEATWSCYKGGARHCGRCGTCVERREAFDLAGITDPTDYEDADFWLHAIQTRSA</sequence>
<feature type="chain" id="PRO_0000246900" description="7-cyano-7-deazaguanine synthase 1">
    <location>
        <begin position="1"/>
        <end position="232"/>
    </location>
</feature>
<feature type="binding site" evidence="1">
    <location>
        <begin position="7"/>
        <end position="17"/>
    </location>
    <ligand>
        <name>ATP</name>
        <dbReference type="ChEBI" id="CHEBI:30616"/>
    </ligand>
</feature>
<feature type="binding site" evidence="1">
    <location>
        <position position="185"/>
    </location>
    <ligand>
        <name>Zn(2+)</name>
        <dbReference type="ChEBI" id="CHEBI:29105"/>
    </ligand>
</feature>
<feature type="binding site" evidence="1">
    <location>
        <position position="193"/>
    </location>
    <ligand>
        <name>Zn(2+)</name>
        <dbReference type="ChEBI" id="CHEBI:29105"/>
    </ligand>
</feature>
<feature type="binding site" evidence="1">
    <location>
        <position position="196"/>
    </location>
    <ligand>
        <name>Zn(2+)</name>
        <dbReference type="ChEBI" id="CHEBI:29105"/>
    </ligand>
</feature>
<feature type="binding site" evidence="1">
    <location>
        <position position="199"/>
    </location>
    <ligand>
        <name>Zn(2+)</name>
        <dbReference type="ChEBI" id="CHEBI:29105"/>
    </ligand>
</feature>
<feature type="sequence conflict" description="In Ref. 1; CAD31242." evidence="2" ref="1">
    <original>A</original>
    <variation>G</variation>
    <location>
        <position position="53"/>
    </location>
</feature>
<feature type="sequence conflict" description="In Ref. 1; CAD31242." evidence="2" ref="1">
    <original>K</original>
    <variation>Q</variation>
    <location>
        <position position="112"/>
    </location>
</feature>
<feature type="sequence conflict" description="In Ref. 1; CAD31242." evidence="2" ref="1">
    <original>E</original>
    <variation>G</variation>
    <location>
        <position position="218"/>
    </location>
</feature>
<dbReference type="EC" id="6.3.4.20" evidence="1"/>
<dbReference type="EMBL" id="AL672115">
    <property type="protein sequence ID" value="CAD31242.1"/>
    <property type="molecule type" value="Genomic_DNA"/>
</dbReference>
<dbReference type="EMBL" id="BA000012">
    <property type="protein sequence ID" value="BAB52182.1"/>
    <property type="molecule type" value="Genomic_DNA"/>
</dbReference>
<dbReference type="RefSeq" id="WP_010913518.1">
    <property type="nucleotide sequence ID" value="NC_002678.2"/>
</dbReference>
<dbReference type="SMR" id="Q98AZ0"/>
<dbReference type="KEGG" id="mlo:mll5798"/>
<dbReference type="PATRIC" id="fig|266835.9.peg.4613"/>
<dbReference type="eggNOG" id="COG0603">
    <property type="taxonomic scope" value="Bacteria"/>
</dbReference>
<dbReference type="HOGENOM" id="CLU_081854_1_0_5"/>
<dbReference type="UniPathway" id="UPA00391"/>
<dbReference type="Proteomes" id="UP000000552">
    <property type="component" value="Chromosome"/>
</dbReference>
<dbReference type="GO" id="GO:0005524">
    <property type="term" value="F:ATP binding"/>
    <property type="evidence" value="ECO:0007669"/>
    <property type="project" value="UniProtKB-UniRule"/>
</dbReference>
<dbReference type="GO" id="GO:0016879">
    <property type="term" value="F:ligase activity, forming carbon-nitrogen bonds"/>
    <property type="evidence" value="ECO:0007669"/>
    <property type="project" value="UniProtKB-UniRule"/>
</dbReference>
<dbReference type="GO" id="GO:0008270">
    <property type="term" value="F:zinc ion binding"/>
    <property type="evidence" value="ECO:0007669"/>
    <property type="project" value="UniProtKB-UniRule"/>
</dbReference>
<dbReference type="GO" id="GO:0008616">
    <property type="term" value="P:queuosine biosynthetic process"/>
    <property type="evidence" value="ECO:0007669"/>
    <property type="project" value="UniProtKB-UniRule"/>
</dbReference>
<dbReference type="CDD" id="cd01995">
    <property type="entry name" value="QueC-like"/>
    <property type="match status" value="1"/>
</dbReference>
<dbReference type="Gene3D" id="3.40.50.620">
    <property type="entry name" value="HUPs"/>
    <property type="match status" value="1"/>
</dbReference>
<dbReference type="HAMAP" id="MF_01633">
    <property type="entry name" value="QueC"/>
    <property type="match status" value="1"/>
</dbReference>
<dbReference type="InterPro" id="IPR018317">
    <property type="entry name" value="QueC"/>
</dbReference>
<dbReference type="InterPro" id="IPR014729">
    <property type="entry name" value="Rossmann-like_a/b/a_fold"/>
</dbReference>
<dbReference type="NCBIfam" id="TIGR00364">
    <property type="entry name" value="7-cyano-7-deazaguanine synthase QueC"/>
    <property type="match status" value="1"/>
</dbReference>
<dbReference type="PANTHER" id="PTHR42914">
    <property type="entry name" value="7-CYANO-7-DEAZAGUANINE SYNTHASE"/>
    <property type="match status" value="1"/>
</dbReference>
<dbReference type="PANTHER" id="PTHR42914:SF1">
    <property type="entry name" value="7-CYANO-7-DEAZAGUANINE SYNTHASE"/>
    <property type="match status" value="1"/>
</dbReference>
<dbReference type="Pfam" id="PF06508">
    <property type="entry name" value="QueC"/>
    <property type="match status" value="1"/>
</dbReference>
<dbReference type="PIRSF" id="PIRSF006293">
    <property type="entry name" value="ExsB"/>
    <property type="match status" value="1"/>
</dbReference>
<dbReference type="SUPFAM" id="SSF52402">
    <property type="entry name" value="Adenine nucleotide alpha hydrolases-like"/>
    <property type="match status" value="1"/>
</dbReference>
<gene>
    <name evidence="1" type="primary">queC1</name>
    <name type="ordered locus">mll5798</name>
</gene>
<name>QUEC1_RHILO</name>
<accession>Q98AZ0</accession>
<accession>Q8KGJ8</accession>
<evidence type="ECO:0000255" key="1">
    <source>
        <dbReference type="HAMAP-Rule" id="MF_01633"/>
    </source>
</evidence>
<evidence type="ECO:0000305" key="2"/>
<keyword id="KW-0067">ATP-binding</keyword>
<keyword id="KW-0436">Ligase</keyword>
<keyword id="KW-0479">Metal-binding</keyword>
<keyword id="KW-0547">Nucleotide-binding</keyword>
<keyword id="KW-0671">Queuosine biosynthesis</keyword>
<keyword id="KW-0862">Zinc</keyword>
<reference key="1">
    <citation type="journal article" date="2002" name="J. Bacteriol.">
        <title>Comparative sequence analysis of the symbiosis island of Mesorhizobium loti strain R7A.</title>
        <authorList>
            <person name="Sullivan J.T."/>
            <person name="Trzebiatowski J.R."/>
            <person name="Cruickshank R.W."/>
            <person name="Gouzy J."/>
            <person name="Brown S.D."/>
            <person name="Elliot R.M."/>
            <person name="Fleetwood D.J."/>
            <person name="McCallum N.G."/>
            <person name="Rossbach U."/>
            <person name="Stuart G.S."/>
            <person name="Weaver J.E."/>
            <person name="Webby R.J."/>
            <person name="de Bruijn F.J."/>
            <person name="Ronson C.W."/>
        </authorList>
    </citation>
    <scope>NUCLEOTIDE SEQUENCE [GENOMIC DNA]</scope>
    <source>
        <strain>R7A</strain>
    </source>
</reference>
<reference key="2">
    <citation type="journal article" date="2000" name="DNA Res.">
        <title>Complete genome structure of the nitrogen-fixing symbiotic bacterium Mesorhizobium loti.</title>
        <authorList>
            <person name="Kaneko T."/>
            <person name="Nakamura Y."/>
            <person name="Sato S."/>
            <person name="Asamizu E."/>
            <person name="Kato T."/>
            <person name="Sasamoto S."/>
            <person name="Watanabe A."/>
            <person name="Idesawa K."/>
            <person name="Ishikawa A."/>
            <person name="Kawashima K."/>
            <person name="Kimura T."/>
            <person name="Kishida Y."/>
            <person name="Kiyokawa C."/>
            <person name="Kohara M."/>
            <person name="Matsumoto M."/>
            <person name="Matsuno A."/>
            <person name="Mochizuki Y."/>
            <person name="Nakayama S."/>
            <person name="Nakazaki N."/>
            <person name="Shimpo S."/>
            <person name="Sugimoto M."/>
            <person name="Takeuchi C."/>
            <person name="Yamada M."/>
            <person name="Tabata S."/>
        </authorList>
    </citation>
    <scope>NUCLEOTIDE SEQUENCE [LARGE SCALE GENOMIC DNA]</scope>
    <source>
        <strain>LMG 29417 / CECT 9101 / MAFF 303099</strain>
    </source>
</reference>
<comment type="function">
    <text evidence="1">Catalyzes the ATP-dependent conversion of 7-carboxy-7-deazaguanine (CDG) to 7-cyano-7-deazaguanine (preQ(0)).</text>
</comment>
<comment type="catalytic activity">
    <reaction evidence="1">
        <text>7-carboxy-7-deazaguanine + NH4(+) + ATP = 7-cyano-7-deazaguanine + ADP + phosphate + H2O + H(+)</text>
        <dbReference type="Rhea" id="RHEA:27982"/>
        <dbReference type="ChEBI" id="CHEBI:15377"/>
        <dbReference type="ChEBI" id="CHEBI:15378"/>
        <dbReference type="ChEBI" id="CHEBI:28938"/>
        <dbReference type="ChEBI" id="CHEBI:30616"/>
        <dbReference type="ChEBI" id="CHEBI:43474"/>
        <dbReference type="ChEBI" id="CHEBI:45075"/>
        <dbReference type="ChEBI" id="CHEBI:61036"/>
        <dbReference type="ChEBI" id="CHEBI:456216"/>
        <dbReference type="EC" id="6.3.4.20"/>
    </reaction>
</comment>
<comment type="cofactor">
    <cofactor evidence="1">
        <name>Zn(2+)</name>
        <dbReference type="ChEBI" id="CHEBI:29105"/>
    </cofactor>
    <text evidence="1">Binds 1 zinc ion per subunit.</text>
</comment>
<comment type="pathway">
    <text evidence="1">Purine metabolism; 7-cyano-7-deazaguanine biosynthesis.</text>
</comment>
<comment type="similarity">
    <text evidence="1">Belongs to the QueC family.</text>
</comment>
<proteinExistence type="inferred from homology"/>